<comment type="function">
    <text evidence="1">Catalyzes the attachment of valine to tRNA(Val). As ValRS can inadvertently accommodate and process structurally similar amino acids such as threonine, to avoid such errors, it has a 'posttransfer' editing activity that hydrolyzes mischarged Thr-tRNA(Val) in a tRNA-dependent manner.</text>
</comment>
<comment type="catalytic activity">
    <reaction evidence="1">
        <text>tRNA(Val) + L-valine + ATP = L-valyl-tRNA(Val) + AMP + diphosphate</text>
        <dbReference type="Rhea" id="RHEA:10704"/>
        <dbReference type="Rhea" id="RHEA-COMP:9672"/>
        <dbReference type="Rhea" id="RHEA-COMP:9708"/>
        <dbReference type="ChEBI" id="CHEBI:30616"/>
        <dbReference type="ChEBI" id="CHEBI:33019"/>
        <dbReference type="ChEBI" id="CHEBI:57762"/>
        <dbReference type="ChEBI" id="CHEBI:78442"/>
        <dbReference type="ChEBI" id="CHEBI:78537"/>
        <dbReference type="ChEBI" id="CHEBI:456215"/>
        <dbReference type="EC" id="6.1.1.9"/>
    </reaction>
</comment>
<comment type="subunit">
    <text evidence="1">Monomer.</text>
</comment>
<comment type="subcellular location">
    <subcellularLocation>
        <location evidence="1">Cytoplasm</location>
    </subcellularLocation>
</comment>
<comment type="domain">
    <text evidence="1">ValRS has two distinct active sites: one for aminoacylation and one for editing. The misactivated threonine is translocated from the active site to the editing site.</text>
</comment>
<comment type="similarity">
    <text evidence="1">Belongs to the class-I aminoacyl-tRNA synthetase family. ValS type 2 subfamily.</text>
</comment>
<reference key="1">
    <citation type="journal article" date="2003" name="Genome Res.">
        <title>Tropheryma whipplei twist: a human pathogenic Actinobacteria with a reduced genome.</title>
        <authorList>
            <person name="Raoult D."/>
            <person name="Ogata H."/>
            <person name="Audic S."/>
            <person name="Robert C."/>
            <person name="Suhre K."/>
            <person name="Drancourt M."/>
            <person name="Claverie J.-M."/>
        </authorList>
    </citation>
    <scope>NUCLEOTIDE SEQUENCE [LARGE SCALE GENOMIC DNA]</scope>
    <source>
        <strain>Twist</strain>
    </source>
</reference>
<feature type="chain" id="PRO_0000224618" description="Valine--tRNA ligase">
    <location>
        <begin position="1"/>
        <end position="856"/>
    </location>
</feature>
<feature type="short sequence motif" description="'HIGH' region">
    <location>
        <begin position="47"/>
        <end position="57"/>
    </location>
</feature>
<feature type="short sequence motif" description="'KMSKS' region">
    <location>
        <begin position="578"/>
        <end position="582"/>
    </location>
</feature>
<feature type="binding site" evidence="1">
    <location>
        <position position="581"/>
    </location>
    <ligand>
        <name>ATP</name>
        <dbReference type="ChEBI" id="CHEBI:30616"/>
    </ligand>
</feature>
<sequence length="856" mass="97538">MNIPDKPSLEGLEEKWSKLWKSSKIYNFELEQVSAKQDVYSIDTPPPTASGVLHIGHVFSYTHTDIIARFQRMQGKIVFYPMGWDDNGLPTERRVQNYFSVRCDPSLPYCQNLKLAQINNDSMARSISRRNFIELCQQLSEEDERKFEELWNYLGLSVDWSQTYRTIDDDAIHLSQHFFLENVNSGAAYQDWAPTLWDVTYRTAVAQAEIEERQITGFYYRLAFENENATVEIETTRPELLAGCVALVAHPDDNRYKHLFGSHVITPVFDVKVPVLPHRAAQPDKGSGIAMVCTFGDITDVQWWRDLNLQSCPIIDASGRVVPDAPDPIVSERGRRAFATLSGKTLSAAKKHTLEMLISEKSIIGEPRKITHPVKFFEKGDKPLEILLTRQWYIRNGYSDNALTERLIELGKQLQWYPKTMLRRYEGWLTGLNSDWLISRQRFLGVPFPIWYQTDDRGNAKFDDPIFPDRKDLPLDPTIAVPRGYSENQRGAPNGFVAETDVMDTWATSSLTPQLAGKYLKNPKLFEAIFPYSLRPQGQDIIRTWLFSSIIRSEYAHATAPWKSTAISGFILDPDRKKMSKSKGNAKTPKDILDRYGADAVRYWAACARLGVDTALDVENPTQIKIGRRLALKVLNAARFVVHLHKNKETYSGQPDMKRCYPIDFAAISNPLDLSLLKQLDQTIEQSTNALKNFDHSKALDTTETFFWNFCDNYVEIVKDRAYAGDESALTTLLVVTNIVIKLLAPFIPYATEEAWSWFNETSVHTQSWPETLKLHSGDIELLKIACSFMSLVRGGKTEAKLSQKTEIAYLKIALPNPEIIMPIMDDLRRAGKIDKCELIDGDAQILAIEYGEISR</sequence>
<proteinExistence type="inferred from homology"/>
<keyword id="KW-0030">Aminoacyl-tRNA synthetase</keyword>
<keyword id="KW-0067">ATP-binding</keyword>
<keyword id="KW-0963">Cytoplasm</keyword>
<keyword id="KW-0436">Ligase</keyword>
<keyword id="KW-0547">Nucleotide-binding</keyword>
<keyword id="KW-0648">Protein biosynthesis</keyword>
<keyword id="KW-1185">Reference proteome</keyword>
<organism>
    <name type="scientific">Tropheryma whipplei (strain Twist)</name>
    <name type="common">Whipple's bacillus</name>
    <dbReference type="NCBI Taxonomy" id="203267"/>
    <lineage>
        <taxon>Bacteria</taxon>
        <taxon>Bacillati</taxon>
        <taxon>Actinomycetota</taxon>
        <taxon>Actinomycetes</taxon>
        <taxon>Micrococcales</taxon>
        <taxon>Tropherymataceae</taxon>
        <taxon>Tropheryma</taxon>
    </lineage>
</organism>
<gene>
    <name evidence="1" type="primary">valS</name>
    <name type="ordered locus">TWT_478</name>
</gene>
<name>SYV_TROWT</name>
<evidence type="ECO:0000255" key="1">
    <source>
        <dbReference type="HAMAP-Rule" id="MF_02005"/>
    </source>
</evidence>
<protein>
    <recommendedName>
        <fullName evidence="1">Valine--tRNA ligase</fullName>
        <ecNumber evidence="1">6.1.1.9</ecNumber>
    </recommendedName>
    <alternativeName>
        <fullName evidence="1">Valyl-tRNA synthetase</fullName>
        <shortName evidence="1">ValRS</shortName>
    </alternativeName>
</protein>
<dbReference type="EC" id="6.1.1.9" evidence="1"/>
<dbReference type="EMBL" id="AE014184">
    <property type="protein sequence ID" value="AAO44575.1"/>
    <property type="molecule type" value="Genomic_DNA"/>
</dbReference>
<dbReference type="RefSeq" id="WP_011102600.1">
    <property type="nucleotide sequence ID" value="NC_004572.3"/>
</dbReference>
<dbReference type="SMR" id="Q83G51"/>
<dbReference type="STRING" id="203267.TWT_478"/>
<dbReference type="KEGG" id="twh:TWT_478"/>
<dbReference type="eggNOG" id="COG0525">
    <property type="taxonomic scope" value="Bacteria"/>
</dbReference>
<dbReference type="HOGENOM" id="CLU_001493_0_2_11"/>
<dbReference type="OrthoDB" id="9810365at2"/>
<dbReference type="Proteomes" id="UP000002200">
    <property type="component" value="Chromosome"/>
</dbReference>
<dbReference type="GO" id="GO:0005829">
    <property type="term" value="C:cytosol"/>
    <property type="evidence" value="ECO:0007669"/>
    <property type="project" value="TreeGrafter"/>
</dbReference>
<dbReference type="GO" id="GO:0002161">
    <property type="term" value="F:aminoacyl-tRNA deacylase activity"/>
    <property type="evidence" value="ECO:0007669"/>
    <property type="project" value="InterPro"/>
</dbReference>
<dbReference type="GO" id="GO:0005524">
    <property type="term" value="F:ATP binding"/>
    <property type="evidence" value="ECO:0007669"/>
    <property type="project" value="UniProtKB-UniRule"/>
</dbReference>
<dbReference type="GO" id="GO:0004832">
    <property type="term" value="F:valine-tRNA ligase activity"/>
    <property type="evidence" value="ECO:0007669"/>
    <property type="project" value="UniProtKB-UniRule"/>
</dbReference>
<dbReference type="GO" id="GO:0006438">
    <property type="term" value="P:valyl-tRNA aminoacylation"/>
    <property type="evidence" value="ECO:0007669"/>
    <property type="project" value="UniProtKB-UniRule"/>
</dbReference>
<dbReference type="CDD" id="cd07962">
    <property type="entry name" value="Anticodon_Ia_Val"/>
    <property type="match status" value="1"/>
</dbReference>
<dbReference type="Gene3D" id="3.40.50.620">
    <property type="entry name" value="HUPs"/>
    <property type="match status" value="2"/>
</dbReference>
<dbReference type="Gene3D" id="1.10.730.10">
    <property type="entry name" value="Isoleucyl-tRNA Synthetase, Domain 1"/>
    <property type="match status" value="1"/>
</dbReference>
<dbReference type="HAMAP" id="MF_02005">
    <property type="entry name" value="Val_tRNA_synth_type2"/>
    <property type="match status" value="1"/>
</dbReference>
<dbReference type="InterPro" id="IPR001412">
    <property type="entry name" value="aa-tRNA-synth_I_CS"/>
</dbReference>
<dbReference type="InterPro" id="IPR002300">
    <property type="entry name" value="aa-tRNA-synth_Ia"/>
</dbReference>
<dbReference type="InterPro" id="IPR033705">
    <property type="entry name" value="Anticodon_Ia_Val"/>
</dbReference>
<dbReference type="InterPro" id="IPR013155">
    <property type="entry name" value="M/V/L/I-tRNA-synth_anticd-bd"/>
</dbReference>
<dbReference type="InterPro" id="IPR014729">
    <property type="entry name" value="Rossmann-like_a/b/a_fold"/>
</dbReference>
<dbReference type="InterPro" id="IPR009080">
    <property type="entry name" value="tRNAsynth_Ia_anticodon-bd"/>
</dbReference>
<dbReference type="InterPro" id="IPR009008">
    <property type="entry name" value="Val/Leu/Ile-tRNA-synth_edit"/>
</dbReference>
<dbReference type="InterPro" id="IPR022874">
    <property type="entry name" value="Valine-tRNA_ligase_type_2"/>
</dbReference>
<dbReference type="InterPro" id="IPR002303">
    <property type="entry name" value="Valyl-tRNA_ligase"/>
</dbReference>
<dbReference type="InterPro" id="IPR048044">
    <property type="entry name" value="Valyl-tRNA_ligase_actino"/>
</dbReference>
<dbReference type="NCBIfam" id="NF000540">
    <property type="entry name" value="alt_ValS"/>
    <property type="match status" value="1"/>
</dbReference>
<dbReference type="NCBIfam" id="NF009687">
    <property type="entry name" value="PRK13208.1"/>
    <property type="match status" value="1"/>
</dbReference>
<dbReference type="PANTHER" id="PTHR11946:SF93">
    <property type="entry name" value="VALINE--TRNA LIGASE, CHLOROPLASTIC_MITOCHONDRIAL 2"/>
    <property type="match status" value="1"/>
</dbReference>
<dbReference type="PANTHER" id="PTHR11946">
    <property type="entry name" value="VALYL-TRNA SYNTHETASES"/>
    <property type="match status" value="1"/>
</dbReference>
<dbReference type="Pfam" id="PF08264">
    <property type="entry name" value="Anticodon_1"/>
    <property type="match status" value="1"/>
</dbReference>
<dbReference type="Pfam" id="PF00133">
    <property type="entry name" value="tRNA-synt_1"/>
    <property type="match status" value="1"/>
</dbReference>
<dbReference type="PRINTS" id="PR00986">
    <property type="entry name" value="TRNASYNTHVAL"/>
</dbReference>
<dbReference type="SUPFAM" id="SSF47323">
    <property type="entry name" value="Anticodon-binding domain of a subclass of class I aminoacyl-tRNA synthetases"/>
    <property type="match status" value="1"/>
</dbReference>
<dbReference type="SUPFAM" id="SSF52374">
    <property type="entry name" value="Nucleotidylyl transferase"/>
    <property type="match status" value="1"/>
</dbReference>
<dbReference type="SUPFAM" id="SSF50677">
    <property type="entry name" value="ValRS/IleRS/LeuRS editing domain"/>
    <property type="match status" value="1"/>
</dbReference>
<dbReference type="PROSITE" id="PS00178">
    <property type="entry name" value="AA_TRNA_LIGASE_I"/>
    <property type="match status" value="1"/>
</dbReference>
<accession>Q83G51</accession>